<gene>
    <name evidence="1" type="primary">rpsC</name>
    <name type="ordered locus">A2cp1_2024</name>
</gene>
<reference key="1">
    <citation type="submission" date="2009-01" db="EMBL/GenBank/DDBJ databases">
        <title>Complete sequence of Anaeromyxobacter dehalogenans 2CP-1.</title>
        <authorList>
            <person name="Lucas S."/>
            <person name="Copeland A."/>
            <person name="Lapidus A."/>
            <person name="Glavina del Rio T."/>
            <person name="Dalin E."/>
            <person name="Tice H."/>
            <person name="Bruce D."/>
            <person name="Goodwin L."/>
            <person name="Pitluck S."/>
            <person name="Saunders E."/>
            <person name="Brettin T."/>
            <person name="Detter J.C."/>
            <person name="Han C."/>
            <person name="Larimer F."/>
            <person name="Land M."/>
            <person name="Hauser L."/>
            <person name="Kyrpides N."/>
            <person name="Ovchinnikova G."/>
            <person name="Beliaev A.S."/>
            <person name="Richardson P."/>
        </authorList>
    </citation>
    <scope>NUCLEOTIDE SEQUENCE [LARGE SCALE GENOMIC DNA]</scope>
    <source>
        <strain>2CP-1 / ATCC BAA-258</strain>
    </source>
</reference>
<organism>
    <name type="scientific">Anaeromyxobacter dehalogenans (strain 2CP-1 / ATCC BAA-258)</name>
    <dbReference type="NCBI Taxonomy" id="455488"/>
    <lineage>
        <taxon>Bacteria</taxon>
        <taxon>Pseudomonadati</taxon>
        <taxon>Myxococcota</taxon>
        <taxon>Myxococcia</taxon>
        <taxon>Myxococcales</taxon>
        <taxon>Cystobacterineae</taxon>
        <taxon>Anaeromyxobacteraceae</taxon>
        <taxon>Anaeromyxobacter</taxon>
    </lineage>
</organism>
<accession>B8J866</accession>
<protein>
    <recommendedName>
        <fullName evidence="1">Small ribosomal subunit protein uS3</fullName>
    </recommendedName>
    <alternativeName>
        <fullName evidence="2">30S ribosomal protein S3</fullName>
    </alternativeName>
</protein>
<dbReference type="EMBL" id="CP001359">
    <property type="protein sequence ID" value="ACL65365.1"/>
    <property type="molecule type" value="Genomic_DNA"/>
</dbReference>
<dbReference type="RefSeq" id="WP_012525978.1">
    <property type="nucleotide sequence ID" value="NC_011891.1"/>
</dbReference>
<dbReference type="SMR" id="B8J866"/>
<dbReference type="KEGG" id="acp:A2cp1_2024"/>
<dbReference type="HOGENOM" id="CLU_058591_0_2_7"/>
<dbReference type="Proteomes" id="UP000007089">
    <property type="component" value="Chromosome"/>
</dbReference>
<dbReference type="GO" id="GO:0022627">
    <property type="term" value="C:cytosolic small ribosomal subunit"/>
    <property type="evidence" value="ECO:0007669"/>
    <property type="project" value="TreeGrafter"/>
</dbReference>
<dbReference type="GO" id="GO:0003729">
    <property type="term" value="F:mRNA binding"/>
    <property type="evidence" value="ECO:0007669"/>
    <property type="project" value="UniProtKB-UniRule"/>
</dbReference>
<dbReference type="GO" id="GO:0019843">
    <property type="term" value="F:rRNA binding"/>
    <property type="evidence" value="ECO:0007669"/>
    <property type="project" value="UniProtKB-UniRule"/>
</dbReference>
<dbReference type="GO" id="GO:0003735">
    <property type="term" value="F:structural constituent of ribosome"/>
    <property type="evidence" value="ECO:0007669"/>
    <property type="project" value="InterPro"/>
</dbReference>
<dbReference type="GO" id="GO:0006412">
    <property type="term" value="P:translation"/>
    <property type="evidence" value="ECO:0007669"/>
    <property type="project" value="UniProtKB-UniRule"/>
</dbReference>
<dbReference type="CDD" id="cd02412">
    <property type="entry name" value="KH-II_30S_S3"/>
    <property type="match status" value="1"/>
</dbReference>
<dbReference type="FunFam" id="3.30.1140.32:FF:000002">
    <property type="entry name" value="30S ribosomal protein S3"/>
    <property type="match status" value="1"/>
</dbReference>
<dbReference type="FunFam" id="3.30.300.20:FF:000001">
    <property type="entry name" value="30S ribosomal protein S3"/>
    <property type="match status" value="1"/>
</dbReference>
<dbReference type="Gene3D" id="3.30.300.20">
    <property type="match status" value="1"/>
</dbReference>
<dbReference type="Gene3D" id="3.30.1140.32">
    <property type="entry name" value="Ribosomal protein S3, C-terminal domain"/>
    <property type="match status" value="1"/>
</dbReference>
<dbReference type="HAMAP" id="MF_01309_B">
    <property type="entry name" value="Ribosomal_uS3_B"/>
    <property type="match status" value="1"/>
</dbReference>
<dbReference type="InterPro" id="IPR004087">
    <property type="entry name" value="KH_dom"/>
</dbReference>
<dbReference type="InterPro" id="IPR015946">
    <property type="entry name" value="KH_dom-like_a/b"/>
</dbReference>
<dbReference type="InterPro" id="IPR004044">
    <property type="entry name" value="KH_dom_type_2"/>
</dbReference>
<dbReference type="InterPro" id="IPR009019">
    <property type="entry name" value="KH_sf_prok-type"/>
</dbReference>
<dbReference type="InterPro" id="IPR036419">
    <property type="entry name" value="Ribosomal_S3_C_sf"/>
</dbReference>
<dbReference type="InterPro" id="IPR005704">
    <property type="entry name" value="Ribosomal_uS3_bac-typ"/>
</dbReference>
<dbReference type="InterPro" id="IPR001351">
    <property type="entry name" value="Ribosomal_uS3_C"/>
</dbReference>
<dbReference type="InterPro" id="IPR018280">
    <property type="entry name" value="Ribosomal_uS3_CS"/>
</dbReference>
<dbReference type="NCBIfam" id="TIGR01009">
    <property type="entry name" value="rpsC_bact"/>
    <property type="match status" value="1"/>
</dbReference>
<dbReference type="PANTHER" id="PTHR11760">
    <property type="entry name" value="30S/40S RIBOSOMAL PROTEIN S3"/>
    <property type="match status" value="1"/>
</dbReference>
<dbReference type="PANTHER" id="PTHR11760:SF19">
    <property type="entry name" value="SMALL RIBOSOMAL SUBUNIT PROTEIN US3C"/>
    <property type="match status" value="1"/>
</dbReference>
<dbReference type="Pfam" id="PF07650">
    <property type="entry name" value="KH_2"/>
    <property type="match status" value="1"/>
</dbReference>
<dbReference type="Pfam" id="PF00189">
    <property type="entry name" value="Ribosomal_S3_C"/>
    <property type="match status" value="1"/>
</dbReference>
<dbReference type="SMART" id="SM00322">
    <property type="entry name" value="KH"/>
    <property type="match status" value="1"/>
</dbReference>
<dbReference type="SUPFAM" id="SSF54814">
    <property type="entry name" value="Prokaryotic type KH domain (KH-domain type II)"/>
    <property type="match status" value="1"/>
</dbReference>
<dbReference type="SUPFAM" id="SSF54821">
    <property type="entry name" value="Ribosomal protein S3 C-terminal domain"/>
    <property type="match status" value="1"/>
</dbReference>
<dbReference type="PROSITE" id="PS50823">
    <property type="entry name" value="KH_TYPE_2"/>
    <property type="match status" value="1"/>
</dbReference>
<dbReference type="PROSITE" id="PS00548">
    <property type="entry name" value="RIBOSOMAL_S3"/>
    <property type="match status" value="1"/>
</dbReference>
<feature type="chain" id="PRO_1000165473" description="Small ribosomal subunit protein uS3">
    <location>
        <begin position="1"/>
        <end position="224"/>
    </location>
</feature>
<feature type="domain" description="KH type-2" evidence="1">
    <location>
        <begin position="38"/>
        <end position="106"/>
    </location>
</feature>
<proteinExistence type="inferred from homology"/>
<keyword id="KW-0687">Ribonucleoprotein</keyword>
<keyword id="KW-0689">Ribosomal protein</keyword>
<keyword id="KW-0694">RNA-binding</keyword>
<keyword id="KW-0699">rRNA-binding</keyword>
<evidence type="ECO:0000255" key="1">
    <source>
        <dbReference type="HAMAP-Rule" id="MF_01309"/>
    </source>
</evidence>
<evidence type="ECO:0000305" key="2"/>
<comment type="function">
    <text evidence="1">Binds the lower part of the 30S subunit head. Binds mRNA in the 70S ribosome, positioning it for translation.</text>
</comment>
<comment type="subunit">
    <text evidence="1">Part of the 30S ribosomal subunit. Forms a tight complex with proteins S10 and S14.</text>
</comment>
<comment type="similarity">
    <text evidence="1">Belongs to the universal ribosomal protein uS3 family.</text>
</comment>
<sequence length="224" mass="25177">MGQKVHPIGFRLGVIRSWDSKWYEEKNYAKWLHEDIKLREFVKEKLGQAGISRIEIERAANKVKINVHTARPGIVIGKRGAGIETIKKDLQGLTDNEVYLNVVEVRKAETDAQLVAENIATQLERRIAFRRAMKKSVQTALKFGAKGIRVACSGRLGGSEMARYEWYREGRVPLHTLRADIDYGFAEAKTTYGKIGCKVWIMRGEVLPQSAAARAPRTTGGARP</sequence>
<name>RS3_ANAD2</name>